<reference key="1">
    <citation type="submission" date="2005-07" db="EMBL/GenBank/DDBJ databases">
        <authorList>
            <person name="Mural R.J."/>
            <person name="Adams M.D."/>
            <person name="Myers E.W."/>
            <person name="Smith H.O."/>
            <person name="Venter J.C."/>
        </authorList>
    </citation>
    <scope>NUCLEOTIDE SEQUENCE [LARGE SCALE GENOMIC DNA]</scope>
</reference>
<reference key="2">
    <citation type="journal article" date="2004" name="Genome Res.">
        <title>The status, quality, and expansion of the NIH full-length cDNA project: the Mammalian Gene Collection (MGC).</title>
        <authorList>
            <consortium name="The MGC Project Team"/>
        </authorList>
    </citation>
    <scope>NUCLEOTIDE SEQUENCE [LARGE SCALE MRNA]</scope>
    <source>
        <tissue>Embryonic heart</tissue>
    </source>
</reference>
<reference key="3">
    <citation type="submission" date="2002-03" db="EMBL/GenBank/DDBJ databases">
        <title>Molecular cloning and characterization of a rat novel A18 hnRNP protein binding gene.</title>
        <authorList>
            <person name="Chen D."/>
            <person name="Saugstad J."/>
            <person name="Henshall D."/>
            <person name="Minami M."/>
            <person name="Simon R.P."/>
        </authorList>
    </citation>
    <scope>NUCLEOTIDE SEQUENCE [MRNA] OF 1-283</scope>
    <source>
        <tissue>Hippocampus</tissue>
    </source>
</reference>
<reference key="4">
    <citation type="journal article" date="2009" name="J. Biol. Chem.">
        <title>Characterization of an evolutionarily conserved metallophosphoesterase that is expressed in the fetal brain and associated with the WAGR syndrome.</title>
        <authorList>
            <person name="Tyagi R."/>
            <person name="Shenoy A.R."/>
            <person name="Visweswariah S.S."/>
        </authorList>
    </citation>
    <scope>FUNCTION</scope>
    <scope>COFACTOR</scope>
    <scope>BIOPHYSICOCHEMICAL PROPERTIES</scope>
    <scope>SUBUNIT</scope>
    <scope>HOMODIMERIZATION</scope>
    <scope>TISSUE SPECIFICITY</scope>
    <scope>MUTAGENESIS OF ASP-65; HIS-67; ASP-86; ASN-117; HIS-118 AND GLY-252</scope>
</reference>
<reference evidence="6 7 8" key="5">
    <citation type="journal article" date="2011" name="J. Mol. Biol.">
        <title>Unique utilization of a phosphoprotein phosphatase fold by a mammalian phosphodiesterase associated with WAGR syndrome.</title>
        <authorList>
            <person name="Dermol U."/>
            <person name="Janardan V."/>
            <person name="Tyagi R."/>
            <person name="Visweswariah S.S."/>
            <person name="Podobnik M."/>
        </authorList>
    </citation>
    <scope>X-RAY CRYSTALLOGRAPHY (1.26 ANGSTROMS) OF WILD-TYPE AND MUTANTS ARG-67 AND HIS-252 IN COMPLEX WITH MANGANESE AND GMP</scope>
    <scope>FUNCTION</scope>
    <scope>COFACTOR</scope>
    <scope>CATALYTIC ACTIVITY</scope>
    <scope>ACTIVITY REGULATION</scope>
    <scope>MUTAGENESIS OF HIS-67; PHE-183 AND GLY-252</scope>
</reference>
<dbReference type="EC" id="3.1.-.-" evidence="1 2"/>
<dbReference type="EMBL" id="CH473949">
    <property type="protein sequence ID" value="EDL79739.1"/>
    <property type="molecule type" value="Genomic_DNA"/>
</dbReference>
<dbReference type="EMBL" id="CH473949">
    <property type="protein sequence ID" value="EDL79741.1"/>
    <property type="molecule type" value="Genomic_DNA"/>
</dbReference>
<dbReference type="EMBL" id="CH473949">
    <property type="protein sequence ID" value="EDL79742.1"/>
    <property type="molecule type" value="Genomic_DNA"/>
</dbReference>
<dbReference type="EMBL" id="BC161828">
    <property type="protein sequence ID" value="AAI61828.1"/>
    <property type="molecule type" value="mRNA"/>
</dbReference>
<dbReference type="EMBL" id="AY093422">
    <property type="protein sequence ID" value="AAM09960.1"/>
    <property type="status" value="ALT_SEQ"/>
    <property type="molecule type" value="mRNA"/>
</dbReference>
<dbReference type="RefSeq" id="NP_942073.2">
    <property type="nucleotide sequence ID" value="NM_198778.3"/>
</dbReference>
<dbReference type="RefSeq" id="XP_006234742.1">
    <property type="nucleotide sequence ID" value="XM_006234680.3"/>
</dbReference>
<dbReference type="RefSeq" id="XP_006234743.1">
    <property type="nucleotide sequence ID" value="XM_006234681.5"/>
</dbReference>
<dbReference type="RefSeq" id="XP_006234744.1">
    <property type="nucleotide sequence ID" value="XM_006234682.5"/>
</dbReference>
<dbReference type="RefSeq" id="XP_006234745.1">
    <property type="nucleotide sequence ID" value="XM_006234683.5"/>
</dbReference>
<dbReference type="RefSeq" id="XP_008760326.1">
    <property type="nucleotide sequence ID" value="XM_008762104.2"/>
</dbReference>
<dbReference type="RefSeq" id="XP_017447394.1">
    <property type="nucleotide sequence ID" value="XM_017591905.1"/>
</dbReference>
<dbReference type="RefSeq" id="XP_017447395.1">
    <property type="nucleotide sequence ID" value="XM_017591906.1"/>
</dbReference>
<dbReference type="PDB" id="3RL3">
    <property type="method" value="X-ray"/>
    <property type="resolution" value="1.42 A"/>
    <property type="chains" value="A=1-294"/>
</dbReference>
<dbReference type="PDB" id="3RL4">
    <property type="method" value="X-ray"/>
    <property type="resolution" value="1.29 A"/>
    <property type="chains" value="A=1-294"/>
</dbReference>
<dbReference type="PDB" id="3RL5">
    <property type="method" value="X-ray"/>
    <property type="resolution" value="1.26 A"/>
    <property type="chains" value="A=1-294"/>
</dbReference>
<dbReference type="PDBsum" id="3RL3"/>
<dbReference type="PDBsum" id="3RL4"/>
<dbReference type="PDBsum" id="3RL5"/>
<dbReference type="SMR" id="B1WBP0"/>
<dbReference type="FunCoup" id="B1WBP0">
    <property type="interactions" value="1107"/>
</dbReference>
<dbReference type="STRING" id="10116.ENSRNOP00000062716"/>
<dbReference type="PhosphoSitePlus" id="B1WBP0"/>
<dbReference type="PaxDb" id="10116-ENSRNOP00000062716"/>
<dbReference type="Ensembl" id="ENSRNOT00000065168.3">
    <property type="protein sequence ID" value="ENSRNOP00000062716.1"/>
    <property type="gene ID" value="ENSRNOG00000004863.6"/>
</dbReference>
<dbReference type="GeneID" id="362185"/>
<dbReference type="KEGG" id="rno:362185"/>
<dbReference type="UCSC" id="RGD:735060">
    <property type="organism name" value="rat"/>
</dbReference>
<dbReference type="AGR" id="RGD:735060"/>
<dbReference type="CTD" id="744"/>
<dbReference type="RGD" id="735060">
    <property type="gene designation" value="Mpped2"/>
</dbReference>
<dbReference type="eggNOG" id="KOG3947">
    <property type="taxonomic scope" value="Eukaryota"/>
</dbReference>
<dbReference type="GeneTree" id="ENSGT00390000007681"/>
<dbReference type="HOGENOM" id="CLU_041441_1_0_1"/>
<dbReference type="InParanoid" id="B1WBP0"/>
<dbReference type="OMA" id="HTPPYGI"/>
<dbReference type="OrthoDB" id="630188at2759"/>
<dbReference type="PhylomeDB" id="B1WBP0"/>
<dbReference type="TreeFam" id="TF314305"/>
<dbReference type="SABIO-RK" id="B1WBP0"/>
<dbReference type="EvolutionaryTrace" id="B1WBP0"/>
<dbReference type="PRO" id="PR:B1WBP0"/>
<dbReference type="Proteomes" id="UP000002494">
    <property type="component" value="Chromosome 3"/>
</dbReference>
<dbReference type="Proteomes" id="UP000234681">
    <property type="component" value="Chromosome 3"/>
</dbReference>
<dbReference type="Bgee" id="ENSRNOG00000004863">
    <property type="expression patterns" value="Expressed in frontal cortex and 16 other cell types or tissues"/>
</dbReference>
<dbReference type="GO" id="GO:0016208">
    <property type="term" value="F:AMP binding"/>
    <property type="evidence" value="ECO:0000314"/>
    <property type="project" value="UniProtKB"/>
</dbReference>
<dbReference type="GO" id="GO:0019002">
    <property type="term" value="F:GMP binding"/>
    <property type="evidence" value="ECO:0000314"/>
    <property type="project" value="UniProtKB"/>
</dbReference>
<dbReference type="GO" id="GO:0030145">
    <property type="term" value="F:manganese ion binding"/>
    <property type="evidence" value="ECO:0000314"/>
    <property type="project" value="UniProtKB"/>
</dbReference>
<dbReference type="GO" id="GO:0008081">
    <property type="term" value="F:phosphoric diester hydrolase activity"/>
    <property type="evidence" value="ECO:0000314"/>
    <property type="project" value="UniProtKB"/>
</dbReference>
<dbReference type="CDD" id="cd07379">
    <property type="entry name" value="MPP_239FB"/>
    <property type="match status" value="1"/>
</dbReference>
<dbReference type="FunFam" id="3.60.21.10:FF:000023">
    <property type="entry name" value="Metallophosphoesterase mpped2"/>
    <property type="match status" value="1"/>
</dbReference>
<dbReference type="Gene3D" id="3.60.21.10">
    <property type="match status" value="1"/>
</dbReference>
<dbReference type="InterPro" id="IPR024201">
    <property type="entry name" value="Calcineurin-like_Pesterase"/>
</dbReference>
<dbReference type="InterPro" id="IPR004843">
    <property type="entry name" value="Calcineurin-like_PHP_ApaH"/>
</dbReference>
<dbReference type="InterPro" id="IPR029052">
    <property type="entry name" value="Metallo-depent_PP-like"/>
</dbReference>
<dbReference type="InterPro" id="IPR051693">
    <property type="entry name" value="UPF0046_metallophosphoest"/>
</dbReference>
<dbReference type="PANTHER" id="PTHR12905">
    <property type="entry name" value="METALLOPHOSPHOESTERASE"/>
    <property type="match status" value="1"/>
</dbReference>
<dbReference type="PANTHER" id="PTHR12905:SF13">
    <property type="entry name" value="METALLOPHOSPHOESTERASE MPPED2"/>
    <property type="match status" value="1"/>
</dbReference>
<dbReference type="Pfam" id="PF00149">
    <property type="entry name" value="Metallophos"/>
    <property type="match status" value="1"/>
</dbReference>
<dbReference type="PIRSF" id="PIRSF035808">
    <property type="entry name" value="Pdiesterase_Brain_239"/>
    <property type="match status" value="1"/>
</dbReference>
<dbReference type="SUPFAM" id="SSF56300">
    <property type="entry name" value="Metallo-dependent phosphatases"/>
    <property type="match status" value="1"/>
</dbReference>
<feature type="chain" id="PRO_0000386546" description="Metallophosphoesterase MPPED2">
    <location>
        <begin position="1"/>
        <end position="294"/>
    </location>
</feature>
<feature type="binding site" evidence="2 6 7">
    <location>
        <position position="65"/>
    </location>
    <ligand>
        <name>Mn(2+)</name>
        <dbReference type="ChEBI" id="CHEBI:29035"/>
        <label>1</label>
    </ligand>
</feature>
<feature type="binding site" evidence="2 6 7">
    <location>
        <position position="67"/>
    </location>
    <ligand>
        <name>Mn(2+)</name>
        <dbReference type="ChEBI" id="CHEBI:29035"/>
        <label>1</label>
    </ligand>
</feature>
<feature type="binding site" evidence="2 6 7">
    <location>
        <position position="86"/>
    </location>
    <ligand>
        <name>Mn(2+)</name>
        <dbReference type="ChEBI" id="CHEBI:29035"/>
        <label>1</label>
    </ligand>
</feature>
<feature type="binding site" evidence="2 6 7">
    <location>
        <position position="86"/>
    </location>
    <ligand>
        <name>Mn(2+)</name>
        <dbReference type="ChEBI" id="CHEBI:29035"/>
        <label>2</label>
    </ligand>
</feature>
<feature type="binding site" evidence="2 6 7">
    <location>
        <begin position="117"/>
        <end position="118"/>
    </location>
    <ligand>
        <name>GMP</name>
        <dbReference type="ChEBI" id="CHEBI:58115"/>
    </ligand>
</feature>
<feature type="binding site" evidence="2 6 7">
    <location>
        <position position="117"/>
    </location>
    <ligand>
        <name>Mn(2+)</name>
        <dbReference type="ChEBI" id="CHEBI:29035"/>
        <label>2</label>
    </ligand>
</feature>
<feature type="binding site" evidence="2 6 7">
    <location>
        <position position="213"/>
    </location>
    <ligand>
        <name>Mn(2+)</name>
        <dbReference type="ChEBI" id="CHEBI:29035"/>
        <label>2</label>
    </ligand>
</feature>
<feature type="binding site" evidence="2 6 7">
    <location>
        <begin position="225"/>
        <end position="226"/>
    </location>
    <ligand>
        <name>GMP</name>
        <dbReference type="ChEBI" id="CHEBI:58115"/>
    </ligand>
</feature>
<feature type="binding site" evidence="2 6 7">
    <location>
        <begin position="254"/>
        <end position="255"/>
    </location>
    <ligand>
        <name>GMP</name>
        <dbReference type="ChEBI" id="CHEBI:58115"/>
    </ligand>
</feature>
<feature type="binding site" evidence="2 6 7">
    <location>
        <position position="254"/>
    </location>
    <ligand>
        <name>Mn(2+)</name>
        <dbReference type="ChEBI" id="CHEBI:29035"/>
        <label>1</label>
    </ligand>
</feature>
<feature type="mutagenesis site" description="Loss of phosphodiesterase activity." evidence="1">
    <original>D</original>
    <variation>A</variation>
    <location>
        <position position="65"/>
    </location>
</feature>
<feature type="mutagenesis site" description="Loss of phosphodiesterase activity. Disrupts metal cofactor binding." evidence="1">
    <original>H</original>
    <variation>A</variation>
    <variation>R</variation>
    <location>
        <position position="67"/>
    </location>
</feature>
<feature type="mutagenesis site" description="Loss of phosphodiesterase activity." evidence="1">
    <original>D</original>
    <variation>A</variation>
    <location>
        <position position="86"/>
    </location>
</feature>
<feature type="mutagenesis site" description="Loss of phosphodiesterase activity." evidence="1">
    <original>N</original>
    <variation>A</variation>
    <location>
        <position position="117"/>
    </location>
</feature>
<feature type="mutagenesis site" description="Loss of phosphodiesterase activity." evidence="1">
    <original>H</original>
    <variation>A</variation>
    <location>
        <position position="118"/>
    </location>
</feature>
<feature type="mutagenesis site" description="Decreased affinity for manganese. Decreased inhibition by AMP and GMP." evidence="1 2">
    <original>F</original>
    <variation>A</variation>
    <location>
        <position position="183"/>
    </location>
</feature>
<feature type="mutagenesis site" description="Increased affinity for manganese. Decreased inhibition by AMP and GMP." evidence="1 2">
    <original>G</original>
    <variation>H</variation>
    <location>
        <position position="252"/>
    </location>
</feature>
<feature type="sequence conflict" description="In Ref. 3; AAM09960." evidence="4" ref="3">
    <original>D</original>
    <variation>E</variation>
    <location>
        <position position="123"/>
    </location>
</feature>
<feature type="sequence conflict" description="In Ref. 3; AAM09960." evidence="4" ref="3">
    <original>S</original>
    <variation>C</variation>
    <location>
        <position position="159"/>
    </location>
</feature>
<feature type="turn" evidence="10">
    <location>
        <begin position="17"/>
        <end position="20"/>
    </location>
</feature>
<feature type="helix" evidence="10">
    <location>
        <begin position="22"/>
        <end position="33"/>
    </location>
</feature>
<feature type="turn" evidence="10">
    <location>
        <begin position="38"/>
        <end position="40"/>
    </location>
</feature>
<feature type="strand" evidence="10">
    <location>
        <begin position="41"/>
        <end position="43"/>
    </location>
</feature>
<feature type="strand" evidence="10">
    <location>
        <begin position="57"/>
        <end position="64"/>
    </location>
</feature>
<feature type="strand" evidence="10">
    <location>
        <begin position="79"/>
        <end position="83"/>
    </location>
</feature>
<feature type="strand" evidence="10">
    <location>
        <begin position="88"/>
        <end position="90"/>
    </location>
</feature>
<feature type="helix" evidence="10">
    <location>
        <begin position="93"/>
        <end position="104"/>
    </location>
</feature>
<feature type="strand" evidence="10">
    <location>
        <begin position="109"/>
        <end position="113"/>
    </location>
</feature>
<feature type="helix" evidence="10">
    <location>
        <begin position="120"/>
        <end position="122"/>
    </location>
</feature>
<feature type="helix" evidence="10">
    <location>
        <begin position="124"/>
        <end position="130"/>
    </location>
</feature>
<feature type="helix" evidence="10">
    <location>
        <begin position="135"/>
        <end position="137"/>
    </location>
</feature>
<feature type="helix" evidence="10">
    <location>
        <begin position="139"/>
        <end position="142"/>
    </location>
</feature>
<feature type="helix" evidence="10">
    <location>
        <begin position="146"/>
        <end position="149"/>
    </location>
</feature>
<feature type="turn" evidence="10">
    <location>
        <begin position="150"/>
        <end position="152"/>
    </location>
</feature>
<feature type="helix" evidence="10">
    <location>
        <begin position="153"/>
        <end position="155"/>
    </location>
</feature>
<feature type="strand" evidence="10">
    <location>
        <begin position="159"/>
        <end position="161"/>
    </location>
</feature>
<feature type="strand" evidence="10">
    <location>
        <begin position="163"/>
        <end position="169"/>
    </location>
</feature>
<feature type="strand" evidence="10">
    <location>
        <begin position="172"/>
        <end position="177"/>
    </location>
</feature>
<feature type="strand" evidence="9">
    <location>
        <begin position="183"/>
        <end position="185"/>
    </location>
</feature>
<feature type="helix" evidence="10">
    <location>
        <begin position="194"/>
        <end position="200"/>
    </location>
</feature>
<feature type="strand" evidence="10">
    <location>
        <begin position="208"/>
        <end position="214"/>
    </location>
</feature>
<feature type="helix" evidence="10">
    <location>
        <begin position="224"/>
        <end position="226"/>
    </location>
</feature>
<feature type="helix" evidence="10">
    <location>
        <begin position="233"/>
        <end position="241"/>
    </location>
</feature>
<feature type="strand" evidence="10">
    <location>
        <begin position="246"/>
        <end position="250"/>
    </location>
</feature>
<feature type="helix" evidence="10">
    <location>
        <begin position="254"/>
        <end position="256"/>
    </location>
</feature>
<feature type="strand" evidence="10">
    <location>
        <begin position="258"/>
        <end position="261"/>
    </location>
</feature>
<feature type="strand" evidence="10">
    <location>
        <begin position="266"/>
        <end position="269"/>
    </location>
</feature>
<feature type="strand" evidence="10">
    <location>
        <begin position="284"/>
        <end position="289"/>
    </location>
</feature>
<sequence>MAHGIPSQGKVTITVDEYSSNPTQAFTHYNINQSRFQPPHVHMVDPIPYDTPKPAGHTRFVCISDTHSRTDGIQMPYGDILLHTGDFTELGLPSEVKKFNDWLGNLPYEYKIVIAGNHELTFDKEFMADLVKQDYYRFPSVSKLKPEDFDNVQSLLTNSIYLQDSEVTVKGFRIYGAPWTPWFNGWGFNLPRGQSLLDKWNLIPEGTDILMTHGPPLGFRDWVPKELQRVGCVELLNTVQRRVRPKLHVFGGIHEGYGTMTDGYTTYINASTCTVSFQPTNPPIIFDLPNPQGS</sequence>
<keyword id="KW-0002">3D-structure</keyword>
<keyword id="KW-0170">Cobalt</keyword>
<keyword id="KW-0378">Hydrolase</keyword>
<keyword id="KW-0464">Manganese</keyword>
<keyword id="KW-0479">Metal-binding</keyword>
<keyword id="KW-0547">Nucleotide-binding</keyword>
<keyword id="KW-1185">Reference proteome</keyword>
<accession>B1WBP0</accession>
<accession>Q8CFG1</accession>
<gene>
    <name type="primary">Mpped2</name>
</gene>
<protein>
    <recommendedName>
        <fullName>Metallophosphoesterase MPPED2</fullName>
        <ecNumber evidence="1 2">3.1.-.-</ecNumber>
    </recommendedName>
    <alternativeName>
        <fullName evidence="3">239FB</fullName>
    </alternativeName>
    <alternativeName>
        <fullName>Fetal brain protein 239 homolog</fullName>
    </alternativeName>
    <alternativeName>
        <fullName>Metallophosphoesterase domain-containing protein 2</fullName>
    </alternativeName>
</protein>
<organism>
    <name type="scientific">Rattus norvegicus</name>
    <name type="common">Rat</name>
    <dbReference type="NCBI Taxonomy" id="10116"/>
    <lineage>
        <taxon>Eukaryota</taxon>
        <taxon>Metazoa</taxon>
        <taxon>Chordata</taxon>
        <taxon>Craniata</taxon>
        <taxon>Vertebrata</taxon>
        <taxon>Euteleostomi</taxon>
        <taxon>Mammalia</taxon>
        <taxon>Eutheria</taxon>
        <taxon>Euarchontoglires</taxon>
        <taxon>Glires</taxon>
        <taxon>Rodentia</taxon>
        <taxon>Myomorpha</taxon>
        <taxon>Muroidea</taxon>
        <taxon>Muridae</taxon>
        <taxon>Murinae</taxon>
        <taxon>Rattus</taxon>
    </lineage>
</organism>
<comment type="function">
    <text evidence="1 2 4">Displays low metallophosphoesterase activity (in vitro) (PubMed:19004815, PubMed:21824479). May play a role in the development of the nervous system (Probable).</text>
</comment>
<comment type="cofactor">
    <cofactor evidence="1 2">
        <name>Mn(2+)</name>
        <dbReference type="ChEBI" id="CHEBI:29035"/>
    </cofactor>
    <cofactor evidence="1">
        <name>Co(2+)</name>
        <dbReference type="ChEBI" id="CHEBI:48828"/>
    </cofactor>
</comment>
<comment type="activity regulation">
    <text evidence="2">Inhibited by nmolar levels of AMP and GMP.</text>
</comment>
<comment type="biophysicochemical properties">
    <kinetics>
        <KM evidence="1">10 mM for p-nitrophenyl phenyphosphonate</KM>
        <KM evidence="1">1.5 mM for manganese</KM>
        <Vmax evidence="1">8.0 umol/min/mg enzyme with p-nitrophenyl phenyphosphonate as substrate</Vmax>
    </kinetics>
</comment>
<comment type="subunit">
    <text evidence="1">Homodimer.</text>
</comment>
<comment type="tissue specificity">
    <text evidence="1">Expressed in fetal brain (at protein level). detected in fetal and adult brain.</text>
</comment>
<comment type="miscellaneous">
    <text evidence="5">This protein has a low affinity for cofactor and demonstrates very restricted substrate specificity. The enzyme may need additional interacting proteins to show full activity, or may be losing its activity and acquiring the role of a scaffolding protein.</text>
</comment>
<comment type="similarity">
    <text evidence="4">Belongs to the UPF0046 family.</text>
</comment>
<comment type="sequence caution" evidence="4">
    <conflict type="erroneous termination">
        <sequence resource="EMBL-CDS" id="AAM09960"/>
    </conflict>
    <text>Truncated C-terminus.</text>
</comment>
<proteinExistence type="evidence at protein level"/>
<evidence type="ECO:0000269" key="1">
    <source>
    </source>
</evidence>
<evidence type="ECO:0000269" key="2">
    <source>
    </source>
</evidence>
<evidence type="ECO:0000303" key="3">
    <source>
    </source>
</evidence>
<evidence type="ECO:0000305" key="4"/>
<evidence type="ECO:0000305" key="5">
    <source>
    </source>
</evidence>
<evidence type="ECO:0007744" key="6">
    <source>
        <dbReference type="PDB" id="3RL3"/>
    </source>
</evidence>
<evidence type="ECO:0007744" key="7">
    <source>
        <dbReference type="PDB" id="3RL4"/>
    </source>
</evidence>
<evidence type="ECO:0007744" key="8">
    <source>
        <dbReference type="PDB" id="3RL5"/>
    </source>
</evidence>
<evidence type="ECO:0007829" key="9">
    <source>
        <dbReference type="PDB" id="3RL4"/>
    </source>
</evidence>
<evidence type="ECO:0007829" key="10">
    <source>
        <dbReference type="PDB" id="3RL5"/>
    </source>
</evidence>
<name>MPPD2_RAT</name>